<evidence type="ECO:0000255" key="1">
    <source>
        <dbReference type="HAMAP-Rule" id="MF_01342"/>
    </source>
</evidence>
<evidence type="ECO:0000305" key="2"/>
<proteinExistence type="inferred from homology"/>
<dbReference type="EMBL" id="AE009949">
    <property type="protein sequence ID" value="AAL96883.1"/>
    <property type="molecule type" value="Genomic_DNA"/>
</dbReference>
<dbReference type="RefSeq" id="WP_002986644.1">
    <property type="nucleotide sequence ID" value="NC_003485.1"/>
</dbReference>
<dbReference type="SMR" id="Q7CNP9"/>
<dbReference type="GeneID" id="69900033"/>
<dbReference type="KEGG" id="spm:spyM18_0058"/>
<dbReference type="HOGENOM" id="CLU_078858_2_1_9"/>
<dbReference type="GO" id="GO:0022625">
    <property type="term" value="C:cytosolic large ribosomal subunit"/>
    <property type="evidence" value="ECO:0007669"/>
    <property type="project" value="TreeGrafter"/>
</dbReference>
<dbReference type="GO" id="GO:0019843">
    <property type="term" value="F:rRNA binding"/>
    <property type="evidence" value="ECO:0007669"/>
    <property type="project" value="UniProtKB-UniRule"/>
</dbReference>
<dbReference type="GO" id="GO:0003735">
    <property type="term" value="F:structural constituent of ribosome"/>
    <property type="evidence" value="ECO:0007669"/>
    <property type="project" value="InterPro"/>
</dbReference>
<dbReference type="GO" id="GO:0000049">
    <property type="term" value="F:tRNA binding"/>
    <property type="evidence" value="ECO:0007669"/>
    <property type="project" value="UniProtKB-KW"/>
</dbReference>
<dbReference type="GO" id="GO:0006412">
    <property type="term" value="P:translation"/>
    <property type="evidence" value="ECO:0007669"/>
    <property type="project" value="UniProtKB-UniRule"/>
</dbReference>
<dbReference type="CDD" id="cd01433">
    <property type="entry name" value="Ribosomal_L16_L10e"/>
    <property type="match status" value="1"/>
</dbReference>
<dbReference type="FunFam" id="3.90.1170.10:FF:000001">
    <property type="entry name" value="50S ribosomal protein L16"/>
    <property type="match status" value="1"/>
</dbReference>
<dbReference type="Gene3D" id="3.90.1170.10">
    <property type="entry name" value="Ribosomal protein L10e/L16"/>
    <property type="match status" value="1"/>
</dbReference>
<dbReference type="HAMAP" id="MF_01342">
    <property type="entry name" value="Ribosomal_uL16"/>
    <property type="match status" value="1"/>
</dbReference>
<dbReference type="InterPro" id="IPR047873">
    <property type="entry name" value="Ribosomal_uL16"/>
</dbReference>
<dbReference type="InterPro" id="IPR000114">
    <property type="entry name" value="Ribosomal_uL16_bact-type"/>
</dbReference>
<dbReference type="InterPro" id="IPR020798">
    <property type="entry name" value="Ribosomal_uL16_CS"/>
</dbReference>
<dbReference type="InterPro" id="IPR016180">
    <property type="entry name" value="Ribosomal_uL16_dom"/>
</dbReference>
<dbReference type="InterPro" id="IPR036920">
    <property type="entry name" value="Ribosomal_uL16_sf"/>
</dbReference>
<dbReference type="NCBIfam" id="TIGR01164">
    <property type="entry name" value="rplP_bact"/>
    <property type="match status" value="1"/>
</dbReference>
<dbReference type="PANTHER" id="PTHR12220">
    <property type="entry name" value="50S/60S RIBOSOMAL PROTEIN L16"/>
    <property type="match status" value="1"/>
</dbReference>
<dbReference type="PANTHER" id="PTHR12220:SF13">
    <property type="entry name" value="LARGE RIBOSOMAL SUBUNIT PROTEIN UL16M"/>
    <property type="match status" value="1"/>
</dbReference>
<dbReference type="Pfam" id="PF00252">
    <property type="entry name" value="Ribosomal_L16"/>
    <property type="match status" value="1"/>
</dbReference>
<dbReference type="PRINTS" id="PR00060">
    <property type="entry name" value="RIBOSOMALL16"/>
</dbReference>
<dbReference type="SUPFAM" id="SSF54686">
    <property type="entry name" value="Ribosomal protein L16p/L10e"/>
    <property type="match status" value="1"/>
</dbReference>
<dbReference type="PROSITE" id="PS00586">
    <property type="entry name" value="RIBOSOMAL_L16_1"/>
    <property type="match status" value="1"/>
</dbReference>
<dbReference type="PROSITE" id="PS00701">
    <property type="entry name" value="RIBOSOMAL_L16_2"/>
    <property type="match status" value="1"/>
</dbReference>
<reference key="1">
    <citation type="journal article" date="2002" name="Proc. Natl. Acad. Sci. U.S.A.">
        <title>Genome sequence and comparative microarray analysis of serotype M18 group A Streptococcus strains associated with acute rheumatic fever outbreaks.</title>
        <authorList>
            <person name="Smoot J.C."/>
            <person name="Barbian K.D."/>
            <person name="Van Gompel J.J."/>
            <person name="Smoot L.M."/>
            <person name="Chaussee M.S."/>
            <person name="Sylva G.L."/>
            <person name="Sturdevant D.E."/>
            <person name="Ricklefs S.M."/>
            <person name="Porcella S.F."/>
            <person name="Parkins L.D."/>
            <person name="Beres S.B."/>
            <person name="Campbell D.S."/>
            <person name="Smith T.M."/>
            <person name="Zhang Q."/>
            <person name="Kapur V."/>
            <person name="Daly J.A."/>
            <person name="Veasy L.G."/>
            <person name="Musser J.M."/>
        </authorList>
    </citation>
    <scope>NUCLEOTIDE SEQUENCE [LARGE SCALE GENOMIC DNA]</scope>
    <source>
        <strain>MGAS8232</strain>
    </source>
</reference>
<comment type="function">
    <text evidence="1">Binds 23S rRNA and is also seen to make contacts with the A and possibly P site tRNAs.</text>
</comment>
<comment type="subunit">
    <text evidence="1">Part of the 50S ribosomal subunit.</text>
</comment>
<comment type="similarity">
    <text evidence="1">Belongs to the universal ribosomal protein uL16 family.</text>
</comment>
<accession>Q7CNP9</accession>
<protein>
    <recommendedName>
        <fullName evidence="1">Large ribosomal subunit protein uL16</fullName>
    </recommendedName>
    <alternativeName>
        <fullName evidence="2">50S ribosomal protein L16</fullName>
    </alternativeName>
</protein>
<keyword id="KW-0687">Ribonucleoprotein</keyword>
<keyword id="KW-0689">Ribosomal protein</keyword>
<keyword id="KW-0694">RNA-binding</keyword>
<keyword id="KW-0699">rRNA-binding</keyword>
<keyword id="KW-0820">tRNA-binding</keyword>
<name>RL16_STRP8</name>
<organism>
    <name type="scientific">Streptococcus pyogenes serotype M18 (strain MGAS8232)</name>
    <dbReference type="NCBI Taxonomy" id="186103"/>
    <lineage>
        <taxon>Bacteria</taxon>
        <taxon>Bacillati</taxon>
        <taxon>Bacillota</taxon>
        <taxon>Bacilli</taxon>
        <taxon>Lactobacillales</taxon>
        <taxon>Streptococcaceae</taxon>
        <taxon>Streptococcus</taxon>
    </lineage>
</organism>
<sequence length="137" mass="15452">MLVPKRVKHRREFRGKMRGEAKGGKEVSFGEYGLQATTSHWITNRQIEAARIAMTRYMKRGGKVWIKIFPHKSYTAKAIGVRMGSGKGAPEGWVAPVKRGKVMFEIAGVSEEIAREALRLASHKLPVKCKFVKREAE</sequence>
<gene>
    <name evidence="1" type="primary">rplP</name>
    <name type="ordered locus">spyM18_0058</name>
</gene>
<feature type="chain" id="PRO_0000062220" description="Large ribosomal subunit protein uL16">
    <location>
        <begin position="1"/>
        <end position="137"/>
    </location>
</feature>